<name>TRUB_BRUA2</name>
<feature type="chain" id="PRO_0000229344" description="tRNA pseudouridine synthase B">
    <location>
        <begin position="1"/>
        <end position="324"/>
    </location>
</feature>
<feature type="region of interest" description="Disordered" evidence="2">
    <location>
        <begin position="87"/>
        <end position="107"/>
    </location>
</feature>
<feature type="active site" description="Nucleophile" evidence="1">
    <location>
        <position position="49"/>
    </location>
</feature>
<dbReference type="EC" id="5.4.99.25" evidence="1"/>
<dbReference type="EMBL" id="AM040264">
    <property type="protein sequence ID" value="CAJ12123.1"/>
    <property type="molecule type" value="Genomic_DNA"/>
</dbReference>
<dbReference type="RefSeq" id="WP_002965229.1">
    <property type="nucleotide sequence ID" value="NZ_KN046823.1"/>
</dbReference>
<dbReference type="SMR" id="Q2YQR5"/>
<dbReference type="STRING" id="359391.BAB1_2167"/>
<dbReference type="GeneID" id="93017531"/>
<dbReference type="KEGG" id="bmf:BAB1_2167"/>
<dbReference type="PATRIC" id="fig|359391.11.peg.1404"/>
<dbReference type="HOGENOM" id="CLU_032087_0_3_5"/>
<dbReference type="PhylomeDB" id="Q2YQR5"/>
<dbReference type="Proteomes" id="UP000002719">
    <property type="component" value="Chromosome I"/>
</dbReference>
<dbReference type="GO" id="GO:0003723">
    <property type="term" value="F:RNA binding"/>
    <property type="evidence" value="ECO:0007669"/>
    <property type="project" value="InterPro"/>
</dbReference>
<dbReference type="GO" id="GO:0160148">
    <property type="term" value="F:tRNA pseudouridine(55) synthase activity"/>
    <property type="evidence" value="ECO:0007669"/>
    <property type="project" value="UniProtKB-EC"/>
</dbReference>
<dbReference type="GO" id="GO:1990481">
    <property type="term" value="P:mRNA pseudouridine synthesis"/>
    <property type="evidence" value="ECO:0007669"/>
    <property type="project" value="TreeGrafter"/>
</dbReference>
<dbReference type="GO" id="GO:0031119">
    <property type="term" value="P:tRNA pseudouridine synthesis"/>
    <property type="evidence" value="ECO:0007669"/>
    <property type="project" value="UniProtKB-UniRule"/>
</dbReference>
<dbReference type="CDD" id="cd02573">
    <property type="entry name" value="PseudoU_synth_EcTruB"/>
    <property type="match status" value="1"/>
</dbReference>
<dbReference type="Gene3D" id="3.30.2350.10">
    <property type="entry name" value="Pseudouridine synthase"/>
    <property type="match status" value="1"/>
</dbReference>
<dbReference type="HAMAP" id="MF_01080">
    <property type="entry name" value="TruB_bact"/>
    <property type="match status" value="1"/>
</dbReference>
<dbReference type="InterPro" id="IPR020103">
    <property type="entry name" value="PsdUridine_synth_cat_dom_sf"/>
</dbReference>
<dbReference type="InterPro" id="IPR002501">
    <property type="entry name" value="PsdUridine_synth_N"/>
</dbReference>
<dbReference type="InterPro" id="IPR014780">
    <property type="entry name" value="tRNA_psdUridine_synth_TruB"/>
</dbReference>
<dbReference type="InterPro" id="IPR015240">
    <property type="entry name" value="tRNA_sdUridine_synth_fam1_C"/>
</dbReference>
<dbReference type="InterPro" id="IPR032819">
    <property type="entry name" value="TruB_C"/>
</dbReference>
<dbReference type="NCBIfam" id="TIGR00431">
    <property type="entry name" value="TruB"/>
    <property type="match status" value="1"/>
</dbReference>
<dbReference type="PANTHER" id="PTHR13767:SF2">
    <property type="entry name" value="PSEUDOURIDYLATE SYNTHASE TRUB1"/>
    <property type="match status" value="1"/>
</dbReference>
<dbReference type="PANTHER" id="PTHR13767">
    <property type="entry name" value="TRNA-PSEUDOURIDINE SYNTHASE"/>
    <property type="match status" value="1"/>
</dbReference>
<dbReference type="Pfam" id="PF09157">
    <property type="entry name" value="TruB-C_2"/>
    <property type="match status" value="1"/>
</dbReference>
<dbReference type="Pfam" id="PF16198">
    <property type="entry name" value="TruB_C_2"/>
    <property type="match status" value="1"/>
</dbReference>
<dbReference type="Pfam" id="PF01509">
    <property type="entry name" value="TruB_N"/>
    <property type="match status" value="1"/>
</dbReference>
<dbReference type="SUPFAM" id="SSF55120">
    <property type="entry name" value="Pseudouridine synthase"/>
    <property type="match status" value="1"/>
</dbReference>
<accession>Q2YQR5</accession>
<comment type="function">
    <text evidence="1">Responsible for synthesis of pseudouridine from uracil-55 in the psi GC loop of transfer RNAs.</text>
</comment>
<comment type="catalytic activity">
    <reaction evidence="1">
        <text>uridine(55) in tRNA = pseudouridine(55) in tRNA</text>
        <dbReference type="Rhea" id="RHEA:42532"/>
        <dbReference type="Rhea" id="RHEA-COMP:10101"/>
        <dbReference type="Rhea" id="RHEA-COMP:10102"/>
        <dbReference type="ChEBI" id="CHEBI:65314"/>
        <dbReference type="ChEBI" id="CHEBI:65315"/>
        <dbReference type="EC" id="5.4.99.25"/>
    </reaction>
</comment>
<comment type="similarity">
    <text evidence="1">Belongs to the pseudouridine synthase TruB family. Type 1 subfamily.</text>
</comment>
<gene>
    <name evidence="1" type="primary">truB</name>
    <name type="ordered locus">BAB1_2167</name>
</gene>
<reference key="1">
    <citation type="journal article" date="2005" name="Infect. Immun.">
        <title>Whole-genome analyses of speciation events in pathogenic Brucellae.</title>
        <authorList>
            <person name="Chain P.S."/>
            <person name="Comerci D.J."/>
            <person name="Tolmasky M.E."/>
            <person name="Larimer F.W."/>
            <person name="Malfatti S.A."/>
            <person name="Vergez L.M."/>
            <person name="Aguero F."/>
            <person name="Land M.L."/>
            <person name="Ugalde R.A."/>
            <person name="Garcia E."/>
        </authorList>
    </citation>
    <scope>NUCLEOTIDE SEQUENCE [LARGE SCALE GENOMIC DNA]</scope>
    <source>
        <strain>2308</strain>
    </source>
</reference>
<protein>
    <recommendedName>
        <fullName evidence="1">tRNA pseudouridine synthase B</fullName>
        <ecNumber evidence="1">5.4.99.25</ecNumber>
    </recommendedName>
    <alternativeName>
        <fullName evidence="1">tRNA pseudouridine(55) synthase</fullName>
        <shortName evidence="1">Psi55 synthase</shortName>
    </alternativeName>
    <alternativeName>
        <fullName evidence="1">tRNA pseudouridylate synthase</fullName>
    </alternativeName>
    <alternativeName>
        <fullName evidence="1">tRNA-uridine isomerase</fullName>
    </alternativeName>
</protein>
<keyword id="KW-0413">Isomerase</keyword>
<keyword id="KW-1185">Reference proteome</keyword>
<keyword id="KW-0819">tRNA processing</keyword>
<evidence type="ECO:0000255" key="1">
    <source>
        <dbReference type="HAMAP-Rule" id="MF_01080"/>
    </source>
</evidence>
<evidence type="ECO:0000256" key="2">
    <source>
        <dbReference type="SAM" id="MobiDB-lite"/>
    </source>
</evidence>
<organism>
    <name type="scientific">Brucella abortus (strain 2308)</name>
    <dbReference type="NCBI Taxonomy" id="359391"/>
    <lineage>
        <taxon>Bacteria</taxon>
        <taxon>Pseudomonadati</taxon>
        <taxon>Pseudomonadota</taxon>
        <taxon>Alphaproteobacteria</taxon>
        <taxon>Hyphomicrobiales</taxon>
        <taxon>Brucellaceae</taxon>
        <taxon>Brucella/Ochrobactrum group</taxon>
        <taxon>Brucella</taxon>
    </lineage>
</organism>
<sequence>MARRGKKKGRPISGWVIFDKPKGMGSTEAVSKIKWLFSAEKAGHAGTLDPLASGMLPIALGEATKTVPYVMDGTKVYRFTVTWGEERSTDDLEGQPTKTSDKRPSREEVEALLPDYTGVISQVPPQFSAIKIDGERAYDLAREGETVEIPAREVEIDRLEIVGFPDADRTEFEVECSKGTYVRSLARDMGRDLGCYGHISDLRRVEVAPFTDEDMVTLAKLEAVWPPLPPKDEDGNVIEPAPRRDFSALDALVIDTGAALDCLPQVPLSDDQAQRVRLGNPVILRGRDAPLEADEACVTTRGKLLAIGYIEHGQFKPKRVFTAG</sequence>
<proteinExistence type="inferred from homology"/>